<organismHost>
    <name type="scientific">Bos taurus</name>
    <name type="common">Bovine</name>
    <dbReference type="NCBI Taxonomy" id="9913"/>
</organismHost>
<dbReference type="EMBL" id="X98869">
    <property type="protein sequence ID" value="CAD83158.1"/>
    <property type="molecule type" value="Genomic_RNA"/>
</dbReference>
<dbReference type="SMR" id="Q80IG9"/>
<dbReference type="GO" id="GO:0044166">
    <property type="term" value="C:host cell endoplasmic reticulum lumen"/>
    <property type="evidence" value="ECO:0007669"/>
    <property type="project" value="UniProtKB-SubCell"/>
</dbReference>
<dbReference type="GO" id="GO:0039621">
    <property type="term" value="C:T=13 icosahedral viral capsid"/>
    <property type="evidence" value="ECO:0007669"/>
    <property type="project" value="UniProtKB-UniRule"/>
</dbReference>
<dbReference type="GO" id="GO:0039624">
    <property type="term" value="C:viral outer capsid"/>
    <property type="evidence" value="ECO:0007669"/>
    <property type="project" value="UniProtKB-UniRule"/>
</dbReference>
<dbReference type="GO" id="GO:0046872">
    <property type="term" value="F:metal ion binding"/>
    <property type="evidence" value="ECO:0007669"/>
    <property type="project" value="UniProtKB-KW"/>
</dbReference>
<dbReference type="Gene3D" id="3.40.50.11130">
    <property type="entry name" value="Glycoprotein VP7, domain 1"/>
    <property type="match status" value="1"/>
</dbReference>
<dbReference type="Gene3D" id="2.60.120.800">
    <property type="entry name" value="Rotavirus outer-layer protein VP7, domain 2"/>
    <property type="match status" value="1"/>
</dbReference>
<dbReference type="HAMAP" id="MF_04130">
    <property type="entry name" value="Rota_VP7"/>
    <property type="match status" value="1"/>
</dbReference>
<dbReference type="HAMAP" id="MF_04131">
    <property type="entry name" value="Rota_VP7_A"/>
    <property type="match status" value="1"/>
</dbReference>
<dbReference type="InterPro" id="IPR001963">
    <property type="entry name" value="VP7"/>
</dbReference>
<dbReference type="InterPro" id="IPR042207">
    <property type="entry name" value="VP7_1"/>
</dbReference>
<dbReference type="InterPro" id="IPR042210">
    <property type="entry name" value="VP7_2"/>
</dbReference>
<dbReference type="Pfam" id="PF00434">
    <property type="entry name" value="VP7"/>
    <property type="match status" value="1"/>
</dbReference>
<proteinExistence type="inferred from homology"/>
<keyword id="KW-0106">Calcium</keyword>
<keyword id="KW-0167">Capsid protein</keyword>
<keyword id="KW-1015">Disulfide bond</keyword>
<keyword id="KW-0325">Glycoprotein</keyword>
<keyword id="KW-1038">Host endoplasmic reticulum</keyword>
<keyword id="KW-0945">Host-virus interaction</keyword>
<keyword id="KW-0479">Metal-binding</keyword>
<keyword id="KW-1152">Outer capsid protein</keyword>
<keyword id="KW-0732">Signal</keyword>
<keyword id="KW-1146">T=13 icosahedral capsid protein</keyword>
<keyword id="KW-0946">Virion</keyword>
<reference key="1">
    <citation type="journal article" date="1997" name="Virus Genes">
        <title>Bovine rotavirus 993/83 shows a third subtype of avian VP7 protein.</title>
        <authorList>
            <person name="Rohwedder A."/>
            <person name="Hotop H."/>
            <person name="Minamoto N."/>
            <person name="Ito H."/>
            <person name="Nakagomi O."/>
            <person name="Brussow H."/>
        </authorList>
    </citation>
    <scope>NUCLEOTIDE SEQUENCE [GENOMIC RNA]</scope>
</reference>
<protein>
    <recommendedName>
        <fullName evidence="2">Outer capsid glycoprotein VP7</fullName>
    </recommendedName>
</protein>
<organism>
    <name type="scientific">Rotavirus A (isolate RVA/Cow/Germany/993/1983/G18P[17])</name>
    <name type="common">RV-A</name>
    <dbReference type="NCBI Taxonomy" id="45408"/>
    <lineage>
        <taxon>Viruses</taxon>
        <taxon>Riboviria</taxon>
        <taxon>Orthornavirae</taxon>
        <taxon>Duplornaviricota</taxon>
        <taxon>Resentoviricetes</taxon>
        <taxon>Reovirales</taxon>
        <taxon>Sedoreoviridae</taxon>
        <taxon>Rotavirus</taxon>
        <taxon>Rotavirus A</taxon>
    </lineage>
</organism>
<comment type="function">
    <text evidence="2">Calcium-binding protein that interacts with rotavirus cell receptors once the initial attachment by VP4 has been achieved. Rotavirus attachment and entry into the host cell probably involves multiple sequential contacts between the outer capsid proteins VP4 and VP7, and the cell receptors. Following entry into the host cell, low intracellular or intravesicular Ca(2+) concentration probably causes the calcium-stabilized VP7 trimers to dissociate from the virion. This step is probably necessary for the membrane-disrupting entry step and the release of VP4, which is locked onto the virion by VP7.</text>
</comment>
<comment type="subunit">
    <text evidence="2">Homotrimer; disulfide-linked. 2 Ca(2+) ions bound at each subunit interface in the trimer hold the trimer together. Interacts with the intermediate capsid protein VP6. Interacts with the outer capsid protein VP5*.</text>
</comment>
<comment type="subcellular location">
    <subcellularLocation>
        <location evidence="2">Virion</location>
    </subcellularLocation>
    <subcellularLocation>
        <location evidence="2">Host endoplasmic reticulum lumen</location>
    </subcellularLocation>
    <text evidence="2">The outer layer contains 780 copies of VP7, grouped as 260 trimers. Immature double-layered particles assembled in the cytoplasm bud across the membrane of the endoplasmic reticulum, acquiring during this process a transient lipid membrane that is modified with the ER resident viral glycoproteins NSP4 and VP7; these enveloped particles also contain VP4. As the particles move towards the interior of the ER cisternae, the transient lipid membrane and the non-structural protein NSP4 are lost, while the virus surface proteins VP4 and VP7 rearrange to form the outermost virus protein layer, yielding mature infectious triple-layered particles.</text>
</comment>
<comment type="PTM">
    <text evidence="2">N-glycosylated.</text>
</comment>
<comment type="PTM">
    <text evidence="2">The N-terminus is blocked possibly by pyroglutamic acid.</text>
</comment>
<comment type="miscellaneous">
    <text evidence="2">Some rotavirus strains are neuraminidase-sensitive and require sialic acid to attach to the cell surface. Some rotavirus strains are integrin-dependent. Some rotavirus strains depend on ganglioside for their entry into the host cell. Hsp70 also seems to be involved in the entry of some strains.</text>
</comment>
<comment type="miscellaneous">
    <text evidence="2">In group A rotaviruses, VP7 defines the G serotype.</text>
</comment>
<comment type="similarity">
    <text evidence="2">Belongs to the rotavirus VP7 family.</text>
</comment>
<feature type="signal peptide" evidence="2">
    <location>
        <begin position="1"/>
        <end position="53"/>
    </location>
</feature>
<feature type="chain" id="PRO_0000369095" description="Outer capsid glycoprotein VP7" evidence="2">
    <location>
        <begin position="54"/>
        <end position="329"/>
    </location>
</feature>
<feature type="binding site" evidence="2">
    <location>
        <position position="98"/>
    </location>
    <ligand>
        <name>Ca(2+)</name>
        <dbReference type="ChEBI" id="CHEBI:29108"/>
        <label>1</label>
    </ligand>
</feature>
<feature type="binding site" evidence="2">
    <location>
        <position position="180"/>
    </location>
    <ligand>
        <name>Ca(2+)</name>
        <dbReference type="ChEBI" id="CHEBI:29108"/>
        <label>2</label>
    </ligand>
</feature>
<feature type="binding site" evidence="2">
    <location>
        <position position="209"/>
    </location>
    <ligand>
        <name>Ca(2+)</name>
        <dbReference type="ChEBI" id="CHEBI:29108"/>
        <label>1</label>
    </ligand>
</feature>
<feature type="binding site" evidence="2">
    <location>
        <position position="217"/>
    </location>
    <ligand>
        <name>Ca(2+)</name>
        <dbReference type="ChEBI" id="CHEBI:29108"/>
        <label>1</label>
    </ligand>
</feature>
<feature type="binding site" evidence="2">
    <location>
        <position position="219"/>
    </location>
    <ligand>
        <name>Ca(2+)</name>
        <dbReference type="ChEBI" id="CHEBI:29108"/>
        <label>1</label>
    </ligand>
</feature>
<feature type="binding site" evidence="2">
    <location>
        <position position="231"/>
    </location>
    <ligand>
        <name>Ca(2+)</name>
        <dbReference type="ChEBI" id="CHEBI:29108"/>
        <label>2</label>
    </ligand>
</feature>
<feature type="binding site" evidence="2">
    <location>
        <position position="232"/>
    </location>
    <ligand>
        <name>Ca(2+)</name>
        <dbReference type="ChEBI" id="CHEBI:29108"/>
        <label>2</label>
    </ligand>
</feature>
<feature type="binding site" evidence="2">
    <location>
        <position position="234"/>
    </location>
    <ligand>
        <name>Ca(2+)</name>
        <dbReference type="ChEBI" id="CHEBI:29108"/>
        <label>2</label>
    </ligand>
</feature>
<feature type="binding site" evidence="2">
    <location>
        <position position="304"/>
    </location>
    <ligand>
        <name>Ca(2+)</name>
        <dbReference type="ChEBI" id="CHEBI:29108"/>
        <label>2</label>
    </ligand>
</feature>
<feature type="glycosylation site" description="N-linked (GlcNAc...) asparagine; by host" evidence="1">
    <location>
        <position position="72"/>
    </location>
</feature>
<feature type="glycosylation site" description="N-linked (GlcNAc...) asparagine; by host" evidence="1">
    <location>
        <position position="241"/>
    </location>
</feature>
<feature type="glycosylation site" description="N-linked (GlcNAc...) asparagine; by host" evidence="1">
    <location>
        <position position="321"/>
    </location>
</feature>
<feature type="disulfide bond" evidence="2">
    <location>
        <begin position="85"/>
        <end position="138"/>
    </location>
</feature>
<feature type="disulfide bond" evidence="2">
    <location>
        <begin position="168"/>
        <end position="252"/>
    </location>
</feature>
<feature type="disulfide bond" evidence="2">
    <location>
        <begin position="194"/>
        <end position="247"/>
    </location>
</feature>
<feature type="disulfide bond" evidence="2">
    <location>
        <begin position="199"/>
        <end position="210"/>
    </location>
</feature>
<evidence type="ECO:0000255" key="1"/>
<evidence type="ECO:0000255" key="2">
    <source>
        <dbReference type="HAMAP-Rule" id="MF_04131"/>
    </source>
</evidence>
<accession>Q80IG9</accession>
<name>VP7_ROTB9</name>
<sequence length="329" mass="37178">MYSTECTILLIEIIFYFFAAVVVYDAIHKMANSPIFCIAVLAVVFAVSPKCFAQNYGINVPITGSLDVAVPNKTDDQIGLTSSLCIYYPNEAEIEINDNEWKNTVAQLLLTKGWPTTSVYLNGYADLQSFSNNPQLNCDYNIVLVKYDQNAGLDMSELAELLLYEWLCNEMDVNLYYYQQTSEANKWIAMGSDCTIKVCPLNTQTLGIGCQTTDVATFEQLTATEKLAIIDVVDGVNHKVNYTIATCTLKNCIRLNQRENVAIIQVGGPEIIDVSEDPMIVPKMIRATRINWKKWWQVFYTVVDYINTIIQAMSKRSRSLNTSTYFLRI</sequence>